<keyword id="KW-0067">ATP-binding</keyword>
<keyword id="KW-0134">Cell wall</keyword>
<keyword id="KW-0143">Chaperone</keyword>
<keyword id="KW-0413">Isomerase</keyword>
<keyword id="KW-0547">Nucleotide-binding</keyword>
<keyword id="KW-0964">Secreted</keyword>
<name>CH602_MYCVP</name>
<organism>
    <name type="scientific">Mycolicibacterium vanbaalenii (strain DSM 7251 / JCM 13017 / BCRC 16820 / KCTC 9966 / NRRL B-24157 / PYR-1)</name>
    <name type="common">Mycobacterium vanbaalenii</name>
    <dbReference type="NCBI Taxonomy" id="350058"/>
    <lineage>
        <taxon>Bacteria</taxon>
        <taxon>Bacillati</taxon>
        <taxon>Actinomycetota</taxon>
        <taxon>Actinomycetes</taxon>
        <taxon>Mycobacteriales</taxon>
        <taxon>Mycobacteriaceae</taxon>
        <taxon>Mycolicibacterium</taxon>
    </lineage>
</organism>
<feature type="chain" id="PRO_0000332030" description="Chaperonin GroEL 2">
    <location>
        <begin position="1"/>
        <end position="541"/>
    </location>
</feature>
<feature type="binding site" evidence="2">
    <location>
        <begin position="29"/>
        <end position="32"/>
    </location>
    <ligand>
        <name>ATP</name>
        <dbReference type="ChEBI" id="CHEBI:30616"/>
    </ligand>
</feature>
<feature type="binding site" evidence="2">
    <location>
        <begin position="86"/>
        <end position="90"/>
    </location>
    <ligand>
        <name>ATP</name>
        <dbReference type="ChEBI" id="CHEBI:30616"/>
    </ligand>
</feature>
<feature type="binding site" evidence="2">
    <location>
        <position position="413"/>
    </location>
    <ligand>
        <name>ATP</name>
        <dbReference type="ChEBI" id="CHEBI:30616"/>
    </ligand>
</feature>
<feature type="binding site" evidence="2">
    <location>
        <begin position="476"/>
        <end position="478"/>
    </location>
    <ligand>
        <name>ATP</name>
        <dbReference type="ChEBI" id="CHEBI:30616"/>
    </ligand>
</feature>
<feature type="binding site" evidence="2">
    <location>
        <position position="492"/>
    </location>
    <ligand>
        <name>ATP</name>
        <dbReference type="ChEBI" id="CHEBI:30616"/>
    </ligand>
</feature>
<evidence type="ECO:0000250" key="1">
    <source>
        <dbReference type="UniProtKB" id="P9WPE7"/>
    </source>
</evidence>
<evidence type="ECO:0000255" key="2">
    <source>
        <dbReference type="HAMAP-Rule" id="MF_00600"/>
    </source>
</evidence>
<accession>A1T352</accession>
<sequence>MSKIIAYDEEARRGLERGLNALADAVKVTLGPKGRNVVLEKKWGAPTITNDGVSIAKEIELEDPYEKIGAELVKEVAKKTDDVAGDGTTTATVLAQALVREGLRNVAAGANPLGLKRGIEKAVEKVTETLLKSAKEVETKEQIAATAAISAGDTQIGELIAEAMDKVGNEGVITVEESNTFGLQLELTEGMRFDKGYISGYFVTDAERQEAVLEDPYILLVSSKVSTVKDLLPLLEKVIQAGKPLLIIAEDVEGEALSTLVVNKIRGTFKSVAVKAPGFGDRRKAMLQDIAILTGGQVVSEEVGLSLETADVALLGTARKVVVTKDETTIVEGAGDSDAIAGRVAQIRAEIENSDSDYDREKLQERLAKLAGGVAVIKAGAATEVELKERKHRIEDAVRNAKAAVEEGIVAGGGVALLQSAPSLDELNLTGDEATGANIVRVALSAPLKQIAFNGGLEPGVVAEKVTNLPAGHGLNAATGEYEDLLKAGVADPVKVTRSALQNAASIAALFLTTEAVVADKPEKAAAPAGDPTGGMGGMDF</sequence>
<comment type="function">
    <text evidence="2">Together with its co-chaperonin GroES, plays an essential role in assisting protein folding. The GroEL-GroES system forms a nano-cage that allows encapsulation of the non-native substrate proteins and provides a physical environment optimized to promote and accelerate protein folding.</text>
</comment>
<comment type="catalytic activity">
    <reaction evidence="2">
        <text>ATP + H2O + a folded polypeptide = ADP + phosphate + an unfolded polypeptide.</text>
        <dbReference type="EC" id="5.6.1.7"/>
    </reaction>
</comment>
<comment type="subunit">
    <text evidence="2">Forms a cylinder of 14 subunits composed of two heptameric rings stacked back-to-back. Interacts with the co-chaperonin GroES.</text>
</comment>
<comment type="subcellular location">
    <subcellularLocation>
        <location evidence="1">Secreted</location>
        <location evidence="1">Capsule</location>
    </subcellularLocation>
    <subcellularLocation>
        <location evidence="1">Cell surface</location>
    </subcellularLocation>
    <subcellularLocation>
        <location evidence="1">Secreted</location>
        <location evidence="1">Cell wall</location>
    </subcellularLocation>
</comment>
<comment type="similarity">
    <text evidence="2">Belongs to the chaperonin (HSP60) family.</text>
</comment>
<reference key="1">
    <citation type="submission" date="2006-12" db="EMBL/GenBank/DDBJ databases">
        <title>Complete sequence of Mycobacterium vanbaalenii PYR-1.</title>
        <authorList>
            <consortium name="US DOE Joint Genome Institute"/>
            <person name="Copeland A."/>
            <person name="Lucas S."/>
            <person name="Lapidus A."/>
            <person name="Barry K."/>
            <person name="Detter J.C."/>
            <person name="Glavina del Rio T."/>
            <person name="Hammon N."/>
            <person name="Israni S."/>
            <person name="Dalin E."/>
            <person name="Tice H."/>
            <person name="Pitluck S."/>
            <person name="Singan V."/>
            <person name="Schmutz J."/>
            <person name="Larimer F."/>
            <person name="Land M."/>
            <person name="Hauser L."/>
            <person name="Kyrpides N."/>
            <person name="Anderson I.J."/>
            <person name="Miller C."/>
            <person name="Richardson P."/>
        </authorList>
    </citation>
    <scope>NUCLEOTIDE SEQUENCE [LARGE SCALE GENOMIC DNA]</scope>
    <source>
        <strain>DSM 7251 / JCM 13017 / BCRC 16820 / KCTC 9966 / NRRL B-24157 / PYR-1</strain>
    </source>
</reference>
<protein>
    <recommendedName>
        <fullName evidence="2">Chaperonin GroEL 2</fullName>
        <ecNumber evidence="2">5.6.1.7</ecNumber>
    </recommendedName>
    <alternativeName>
        <fullName evidence="2">60 kDa chaperonin 2</fullName>
    </alternativeName>
    <alternativeName>
        <fullName evidence="2">Chaperonin-60 2</fullName>
        <shortName evidence="2">Cpn60 2</shortName>
    </alternativeName>
</protein>
<dbReference type="EC" id="5.6.1.7" evidence="2"/>
<dbReference type="EMBL" id="CP000511">
    <property type="protein sequence ID" value="ABM11602.1"/>
    <property type="molecule type" value="Genomic_DNA"/>
</dbReference>
<dbReference type="SMR" id="A1T352"/>
<dbReference type="STRING" id="350058.Mvan_0764"/>
<dbReference type="KEGG" id="mva:Mvan_0764"/>
<dbReference type="eggNOG" id="COG0459">
    <property type="taxonomic scope" value="Bacteria"/>
</dbReference>
<dbReference type="HOGENOM" id="CLU_016503_3_0_11"/>
<dbReference type="Proteomes" id="UP000009159">
    <property type="component" value="Chromosome"/>
</dbReference>
<dbReference type="GO" id="GO:0042603">
    <property type="term" value="C:capsule"/>
    <property type="evidence" value="ECO:0007669"/>
    <property type="project" value="UniProtKB-SubCell"/>
</dbReference>
<dbReference type="GO" id="GO:0009986">
    <property type="term" value="C:cell surface"/>
    <property type="evidence" value="ECO:0007669"/>
    <property type="project" value="UniProtKB-SubCell"/>
</dbReference>
<dbReference type="GO" id="GO:0005737">
    <property type="term" value="C:cytoplasm"/>
    <property type="evidence" value="ECO:0007669"/>
    <property type="project" value="UniProtKB-UniRule"/>
</dbReference>
<dbReference type="GO" id="GO:0005576">
    <property type="term" value="C:extracellular region"/>
    <property type="evidence" value="ECO:0007669"/>
    <property type="project" value="UniProtKB-KW"/>
</dbReference>
<dbReference type="GO" id="GO:0005524">
    <property type="term" value="F:ATP binding"/>
    <property type="evidence" value="ECO:0007669"/>
    <property type="project" value="UniProtKB-UniRule"/>
</dbReference>
<dbReference type="GO" id="GO:0140662">
    <property type="term" value="F:ATP-dependent protein folding chaperone"/>
    <property type="evidence" value="ECO:0007669"/>
    <property type="project" value="InterPro"/>
</dbReference>
<dbReference type="GO" id="GO:0016853">
    <property type="term" value="F:isomerase activity"/>
    <property type="evidence" value="ECO:0007669"/>
    <property type="project" value="UniProtKB-KW"/>
</dbReference>
<dbReference type="GO" id="GO:0051082">
    <property type="term" value="F:unfolded protein binding"/>
    <property type="evidence" value="ECO:0007669"/>
    <property type="project" value="UniProtKB-UniRule"/>
</dbReference>
<dbReference type="GO" id="GO:0042026">
    <property type="term" value="P:protein refolding"/>
    <property type="evidence" value="ECO:0007669"/>
    <property type="project" value="UniProtKB-UniRule"/>
</dbReference>
<dbReference type="CDD" id="cd03344">
    <property type="entry name" value="GroEL"/>
    <property type="match status" value="1"/>
</dbReference>
<dbReference type="FunFam" id="3.50.7.10:FF:000001">
    <property type="entry name" value="60 kDa chaperonin"/>
    <property type="match status" value="1"/>
</dbReference>
<dbReference type="Gene3D" id="3.50.7.10">
    <property type="entry name" value="GroEL"/>
    <property type="match status" value="1"/>
</dbReference>
<dbReference type="Gene3D" id="1.10.560.10">
    <property type="entry name" value="GroEL-like equatorial domain"/>
    <property type="match status" value="1"/>
</dbReference>
<dbReference type="Gene3D" id="3.30.260.10">
    <property type="entry name" value="TCP-1-like chaperonin intermediate domain"/>
    <property type="match status" value="1"/>
</dbReference>
<dbReference type="HAMAP" id="MF_00600">
    <property type="entry name" value="CH60"/>
    <property type="match status" value="1"/>
</dbReference>
<dbReference type="InterPro" id="IPR018370">
    <property type="entry name" value="Chaperonin_Cpn60_CS"/>
</dbReference>
<dbReference type="InterPro" id="IPR001844">
    <property type="entry name" value="Cpn60/GroEL"/>
</dbReference>
<dbReference type="InterPro" id="IPR002423">
    <property type="entry name" value="Cpn60/GroEL/TCP-1"/>
</dbReference>
<dbReference type="InterPro" id="IPR027409">
    <property type="entry name" value="GroEL-like_apical_dom_sf"/>
</dbReference>
<dbReference type="InterPro" id="IPR027413">
    <property type="entry name" value="GROEL-like_equatorial_sf"/>
</dbReference>
<dbReference type="InterPro" id="IPR027410">
    <property type="entry name" value="TCP-1-like_intermed_sf"/>
</dbReference>
<dbReference type="NCBIfam" id="TIGR02348">
    <property type="entry name" value="GroEL"/>
    <property type="match status" value="1"/>
</dbReference>
<dbReference type="NCBIfam" id="NF000592">
    <property type="entry name" value="PRK00013.1"/>
    <property type="match status" value="1"/>
</dbReference>
<dbReference type="NCBIfam" id="NF009487">
    <property type="entry name" value="PRK12849.1"/>
    <property type="match status" value="1"/>
</dbReference>
<dbReference type="NCBIfam" id="NF009488">
    <property type="entry name" value="PRK12850.1"/>
    <property type="match status" value="1"/>
</dbReference>
<dbReference type="NCBIfam" id="NF009489">
    <property type="entry name" value="PRK12851.1"/>
    <property type="match status" value="1"/>
</dbReference>
<dbReference type="PANTHER" id="PTHR45633">
    <property type="entry name" value="60 KDA HEAT SHOCK PROTEIN, MITOCHONDRIAL"/>
    <property type="match status" value="1"/>
</dbReference>
<dbReference type="Pfam" id="PF00118">
    <property type="entry name" value="Cpn60_TCP1"/>
    <property type="match status" value="1"/>
</dbReference>
<dbReference type="PRINTS" id="PR00298">
    <property type="entry name" value="CHAPERONIN60"/>
</dbReference>
<dbReference type="SUPFAM" id="SSF52029">
    <property type="entry name" value="GroEL apical domain-like"/>
    <property type="match status" value="1"/>
</dbReference>
<dbReference type="SUPFAM" id="SSF48592">
    <property type="entry name" value="GroEL equatorial domain-like"/>
    <property type="match status" value="1"/>
</dbReference>
<dbReference type="SUPFAM" id="SSF54849">
    <property type="entry name" value="GroEL-intermediate domain like"/>
    <property type="match status" value="1"/>
</dbReference>
<dbReference type="PROSITE" id="PS00296">
    <property type="entry name" value="CHAPERONINS_CPN60"/>
    <property type="match status" value="1"/>
</dbReference>
<gene>
    <name evidence="2" type="primary">groEL2</name>
    <name evidence="2" type="synonym">groL2</name>
    <name type="ordered locus">Mvan_0764</name>
</gene>
<proteinExistence type="inferred from homology"/>